<protein>
    <recommendedName>
        <fullName evidence="1 3">Fusexin 1</fullName>
        <shortName evidence="3">NaFsx1</shortName>
    </recommendedName>
</protein>
<feature type="chain" id="PRO_0000458006" description="Fusexin 1">
    <location>
        <begin position="1"/>
        <end position="671"/>
    </location>
</feature>
<feature type="topological domain" description="Cytoplasmic" evidence="4">
    <location>
        <begin position="1"/>
        <end position="12"/>
    </location>
</feature>
<feature type="transmembrane region" description="Helical" evidence="1">
    <location>
        <begin position="13"/>
        <end position="33"/>
    </location>
</feature>
<feature type="topological domain" description="Extracellular" evidence="4">
    <location>
        <begin position="34"/>
        <end position="574"/>
    </location>
</feature>
<feature type="transmembrane region" description="Helical" evidence="1">
    <location>
        <begin position="575"/>
        <end position="595"/>
    </location>
</feature>
<feature type="topological domain" description="Cytoplasmic" evidence="4">
    <location>
        <begin position="596"/>
        <end position="628"/>
    </location>
</feature>
<feature type="transmembrane region" description="Helical" evidence="1">
    <location>
        <begin position="629"/>
        <end position="649"/>
    </location>
</feature>
<feature type="topological domain" description="Extracellular" evidence="4">
    <location>
        <position position="650"/>
    </location>
</feature>
<feature type="transmembrane region" description="Helical" evidence="1">
    <location>
        <begin position="651"/>
        <end position="671"/>
    </location>
</feature>
<feature type="region of interest" description="Fusion loop" evidence="1">
    <location>
        <begin position="168"/>
        <end position="173"/>
    </location>
</feature>
<feature type="disulfide bond" evidence="1">
    <location>
        <begin position="145"/>
        <end position="180"/>
    </location>
</feature>
<feature type="disulfide bond" evidence="1">
    <location>
        <begin position="409"/>
        <end position="452"/>
    </location>
</feature>
<feature type="disulfide bond" evidence="1">
    <location>
        <begin position="480"/>
        <end position="500"/>
    </location>
</feature>
<feature type="disulfide bond" evidence="1">
    <location>
        <begin position="513"/>
        <end position="528"/>
    </location>
</feature>
<sequence length="671" mass="73338">MRAVSDFLKNKWVAVPAVALLILSLGFLAQNYITGSFVSGDQIEYTSNSEFFDGEVFVINYIGDRTTDKIHAEIPASELASAADGEVTKELTIDITSQETYARYSTTSTSLSRIYAFKAINSEVFTDTSSSEVESRKQSWAEQNCYDIDGDSEIEQGDDYTQRFWVDGAIADYYNAQVYCVRENGYYGNIAELSSPDKEFEAEVEVKADGETPQSTTLSNSDLGQGRCDNIGEYVRACWTGLNPTGEGVPEPYNVYAIHSNTFSPEWRVISAERYSSYNSYVENNLYSQIEAWKEGSLSQEEVVSTANDQAAQAAQRVSSGSFTDYQVEDSSYENGQIRLNPSYDIAWPEFTFYVDGADYISVEKPVGEPRIVNVEGDEFGEKQSGTVTAEVENTASYEGSFSARVSKCSDSFGYDSLQETKTVGPGETVSFDFRVSFTSDSFDQKTVSGSCEIVVSDTGDSSNSDTAVVDVEATQSNECTPNEEFVRTINSTHSRILECSSDGLTTTEVDVCGDGEEAAFRDSSWTCVSDGTLPGGGDGSGGSGGGGDTDDCVVFAVGDLEIEDPFCADGPLEMLSKMFHLVAGTAVAFFTGSLGYRAGRWVDGEYQIKGGFDPLKSRSVSRAKRGRFLIGLIAELVSFLLGFYVILLVPIWAQLMVILGYVLFKYYTPF</sequence>
<organism>
    <name type="scientific">Natrinema altunense (strain JCM 12890 / CGMCC 1.3731 / AJ2)</name>
    <dbReference type="NCBI Taxonomy" id="1227494"/>
    <lineage>
        <taxon>Archaea</taxon>
        <taxon>Methanobacteriati</taxon>
        <taxon>Methanobacteriota</taxon>
        <taxon>Stenosarchaea group</taxon>
        <taxon>Halobacteria</taxon>
        <taxon>Halobacteriales</taxon>
        <taxon>Natrialbaceae</taxon>
        <taxon>Natrinema</taxon>
    </lineage>
</organism>
<proteinExistence type="inferred from homology"/>
<accession>L9ZES0</accession>
<comment type="function">
    <text evidence="2">Exhibits fusogenic activity (PubMed:35794124). Mediates cell-cell fusion in mammalian cells (bilateral fusion) (PubMed:35794124).</text>
</comment>
<comment type="subunit">
    <text evidence="1">Homotrimer stabilized by interdomain contacts and numerous Ca(2+) and Na(+) ions.</text>
</comment>
<comment type="subcellular location">
    <subcellularLocation>
        <location evidence="1">Cell surface</location>
    </subcellularLocation>
    <subcellularLocation>
        <location evidence="1">Cell membrane</location>
        <topology evidence="1">Multi-pass membrane protein</topology>
    </subcellularLocation>
</comment>
<comment type="domain">
    <text evidence="1">The extracellular N-terminus has 4 domains; the first 3 are structurally similar to fusogens from plants, C.elegans and viruses, while the fourth domain is unique to archaea. Domains I and II are discontinuous. The fusion loop in domain II is stabilized by a Ca(2+) ion so that it protrudes from the molecule.</text>
</comment>
<comment type="similarity">
    <text evidence="1">Belongs to the HAP2/GCS1 family. Fusexin 1 subfamily.</text>
</comment>
<evidence type="ECO:0000255" key="1">
    <source>
        <dbReference type="HAMAP-Rule" id="MF_00869"/>
    </source>
</evidence>
<evidence type="ECO:0000269" key="2">
    <source>
    </source>
</evidence>
<evidence type="ECO:0000303" key="3">
    <source>
    </source>
</evidence>
<evidence type="ECO:0000305" key="4"/>
<evidence type="ECO:0000312" key="5">
    <source>
        <dbReference type="EMBL" id="ELY83688.1"/>
    </source>
</evidence>
<gene>
    <name evidence="1 3" type="primary">fsx1</name>
    <name evidence="5" type="ORF">C485_18087</name>
</gene>
<keyword id="KW-0106">Calcium</keyword>
<keyword id="KW-1003">Cell membrane</keyword>
<keyword id="KW-1015">Disulfide bond</keyword>
<keyword id="KW-0472">Membrane</keyword>
<keyword id="KW-0479">Metal-binding</keyword>
<keyword id="KW-1185">Reference proteome</keyword>
<keyword id="KW-0812">Transmembrane</keyword>
<keyword id="KW-1133">Transmembrane helix</keyword>
<dbReference type="EMBL" id="AOIK01000043">
    <property type="protein sequence ID" value="ELY83688.1"/>
    <property type="molecule type" value="Genomic_DNA"/>
</dbReference>
<dbReference type="SMR" id="L9ZES0"/>
<dbReference type="PATRIC" id="fig|1227494.3.peg.3589"/>
<dbReference type="Proteomes" id="UP000011511">
    <property type="component" value="Unassembled WGS sequence"/>
</dbReference>
<dbReference type="GO" id="GO:0009986">
    <property type="term" value="C:cell surface"/>
    <property type="evidence" value="ECO:0007669"/>
    <property type="project" value="UniProtKB-SubCell"/>
</dbReference>
<dbReference type="GO" id="GO:0005886">
    <property type="term" value="C:plasma membrane"/>
    <property type="evidence" value="ECO:0007669"/>
    <property type="project" value="UniProtKB-SubCell"/>
</dbReference>
<dbReference type="GO" id="GO:0046872">
    <property type="term" value="F:metal ion binding"/>
    <property type="evidence" value="ECO:0007669"/>
    <property type="project" value="UniProtKB-KW"/>
</dbReference>
<dbReference type="GO" id="GO:0045026">
    <property type="term" value="P:plasma membrane fusion"/>
    <property type="evidence" value="ECO:0000314"/>
    <property type="project" value="UniProtKB"/>
</dbReference>
<dbReference type="HAMAP" id="MF_00869">
    <property type="entry name" value="Fusexin_1"/>
    <property type="match status" value="1"/>
</dbReference>
<dbReference type="InterPro" id="IPR049902">
    <property type="entry name" value="Fsx1"/>
</dbReference>
<reference evidence="5" key="1">
    <citation type="journal article" date="2014" name="PLoS Genet.">
        <title>Phylogenetically driven sequencing of extremely halophilic archaea reveals strategies for static and dynamic osmo-response.</title>
        <authorList>
            <person name="Becker E.A."/>
            <person name="Seitzer P.M."/>
            <person name="Tritt A."/>
            <person name="Larsen D."/>
            <person name="Krusor M."/>
            <person name="Yao A.I."/>
            <person name="Wu D."/>
            <person name="Madern D."/>
            <person name="Eisen J.A."/>
            <person name="Darling A.E."/>
            <person name="Facciotti M.T."/>
        </authorList>
    </citation>
    <scope>NUCLEOTIDE SEQUENCE [LARGE SCALE GENOMIC DNA]</scope>
    <source>
        <strain>JCM 12890 / CGMCC 1.3731 / AJ2</strain>
    </source>
</reference>
<reference key="2">
    <citation type="journal article" date="2022" name="Nat. Commun.">
        <title>Discovery of archaeal fusexins homologous to eukaryotic HAP2/GCS1 gamete fusion proteins.</title>
        <authorList>
            <person name="Moi D."/>
            <person name="Nishio S."/>
            <person name="Li X."/>
            <person name="Valansi C."/>
            <person name="Langleib M."/>
            <person name="Brukman N.G."/>
            <person name="Flyak K."/>
            <person name="Dessimoz C."/>
            <person name="de Sanctis D."/>
            <person name="Tunyasuvunakool K."/>
            <person name="Jumper J."/>
            <person name="Grana M."/>
            <person name="Romero H."/>
            <person name="Aguilar P.S."/>
            <person name="Jovine L."/>
            <person name="Podbilewicz B."/>
        </authorList>
    </citation>
    <scope>FUNCTION</scope>
</reference>
<name>FSX1_NATA2</name>